<feature type="chain" id="PRO_0000420163" description="Glucosyl-3-phosphoglycerate synthase">
    <location>
        <begin position="1"/>
        <end position="324"/>
    </location>
</feature>
<feature type="binding site" evidence="3 17 18 19 20 21">
    <location>
        <begin position="50"/>
        <end position="54"/>
    </location>
    <ligand>
        <name>UDP-alpha-D-glucose</name>
        <dbReference type="ChEBI" id="CHEBI:58885"/>
    </ligand>
</feature>
<feature type="binding site" evidence="3 17 18 19 20 21">
    <location>
        <position position="81"/>
    </location>
    <ligand>
        <name>UDP-alpha-D-glucose</name>
        <dbReference type="ChEBI" id="CHEBI:58885"/>
    </ligand>
</feature>
<feature type="binding site" evidence="4 23">
    <location>
        <position position="114"/>
    </location>
    <ligand>
        <name>(2R)-2-O-(alpha-D-glucopyranosyl)-3-phospho-glycerate</name>
        <dbReference type="ChEBI" id="CHEBI:62600"/>
    </ligand>
</feature>
<feature type="binding site" evidence="3 17 18 19 20 21">
    <location>
        <position position="114"/>
    </location>
    <ligand>
        <name>UDP-alpha-D-glucose</name>
        <dbReference type="ChEBI" id="CHEBI:58885"/>
    </ligand>
</feature>
<feature type="binding site" evidence="3 17 18 19 20 21">
    <location>
        <begin position="134"/>
        <end position="135"/>
    </location>
    <ligand>
        <name>UDP-alpha-D-glucose</name>
        <dbReference type="ChEBI" id="CHEBI:58885"/>
    </ligand>
</feature>
<feature type="binding site" evidence="3 17 18 19 20 21">
    <location>
        <position position="136"/>
    </location>
    <ligand>
        <name>Mn(2+)</name>
        <dbReference type="ChEBI" id="CHEBI:29035"/>
    </ligand>
</feature>
<feature type="binding site" evidence="4 23">
    <location>
        <begin position="184"/>
        <end position="187"/>
    </location>
    <ligand>
        <name>(2R)-2-O-(alpha-D-glucopyranosyl)-3-phospho-glycerate</name>
        <dbReference type="ChEBI" id="CHEBI:62600"/>
    </ligand>
</feature>
<feature type="binding site" evidence="3 4 17 18 21 22">
    <location>
        <begin position="184"/>
        <end position="187"/>
    </location>
    <ligand>
        <name>(2R)-3-phosphoglycerate</name>
        <dbReference type="ChEBI" id="CHEBI:58272"/>
    </ligand>
</feature>
<feature type="binding site" evidence="3 17 18 19 20 21">
    <location>
        <begin position="229"/>
        <end position="232"/>
    </location>
    <ligand>
        <name>UDP-alpha-D-glucose</name>
        <dbReference type="ChEBI" id="CHEBI:58885"/>
    </ligand>
</feature>
<feature type="binding site" evidence="3 17 18 19 20 21">
    <location>
        <begin position="256"/>
        <end position="261"/>
    </location>
    <ligand>
        <name>UDP-alpha-D-glucose</name>
        <dbReference type="ChEBI" id="CHEBI:58885"/>
    </ligand>
</feature>
<feature type="binding site" evidence="4 23">
    <location>
        <position position="256"/>
    </location>
    <ligand>
        <name>(2R)-2-O-(alpha-D-glucopyranosyl)-3-phospho-glycerate</name>
        <dbReference type="ChEBI" id="CHEBI:62600"/>
    </ligand>
</feature>
<feature type="binding site" evidence="3 17 18 19 20 21">
    <location>
        <position position="258"/>
    </location>
    <ligand>
        <name>Mn(2+)</name>
        <dbReference type="ChEBI" id="CHEBI:29035"/>
    </ligand>
</feature>
<feature type="binding site" evidence="3 17 18">
    <location>
        <position position="260"/>
    </location>
    <ligand>
        <name>(2R)-3-phosphoglycerate</name>
        <dbReference type="ChEBI" id="CHEBI:58272"/>
    </ligand>
</feature>
<feature type="strand" evidence="25">
    <location>
        <begin position="21"/>
        <end position="25"/>
    </location>
</feature>
<feature type="helix" evidence="25">
    <location>
        <begin position="33"/>
        <end position="40"/>
    </location>
</feature>
<feature type="strand" evidence="25">
    <location>
        <begin position="45"/>
        <end position="53"/>
    </location>
</feature>
<feature type="turn" evidence="25">
    <location>
        <begin position="55"/>
        <end position="57"/>
    </location>
</feature>
<feature type="helix" evidence="25">
    <location>
        <begin position="58"/>
        <end position="65"/>
    </location>
</feature>
<feature type="helix" evidence="25">
    <location>
        <begin position="66"/>
        <end position="68"/>
    </location>
</feature>
<feature type="turn" evidence="25">
    <location>
        <begin position="70"/>
        <end position="72"/>
    </location>
</feature>
<feature type="strand" evidence="25">
    <location>
        <begin position="73"/>
        <end position="80"/>
    </location>
</feature>
<feature type="helix" evidence="25">
    <location>
        <begin position="87"/>
        <end position="93"/>
    </location>
</feature>
<feature type="strand" evidence="25">
    <location>
        <begin position="97"/>
        <end position="100"/>
    </location>
</feature>
<feature type="helix" evidence="25">
    <location>
        <begin position="101"/>
        <end position="104"/>
    </location>
</feature>
<feature type="helix" evidence="25">
    <location>
        <begin position="114"/>
        <end position="123"/>
    </location>
</feature>
<feature type="strand" evidence="25">
    <location>
        <begin position="128"/>
        <end position="132"/>
    </location>
</feature>
<feature type="strand" evidence="25">
    <location>
        <begin position="137"/>
        <end position="139"/>
    </location>
</feature>
<feature type="helix" evidence="25">
    <location>
        <begin position="144"/>
        <end position="154"/>
    </location>
</feature>
<feature type="strand" evidence="25">
    <location>
        <begin position="155"/>
        <end position="157"/>
    </location>
</feature>
<feature type="strand" evidence="25">
    <location>
        <begin position="160"/>
        <end position="166"/>
    </location>
</feature>
<feature type="helix" evidence="25">
    <location>
        <begin position="185"/>
        <end position="189"/>
    </location>
</feature>
<feature type="helix" evidence="25">
    <location>
        <begin position="191"/>
        <end position="198"/>
    </location>
</feature>
<feature type="helix" evidence="25">
    <location>
        <begin position="200"/>
        <end position="204"/>
    </location>
</feature>
<feature type="strand" evidence="25">
    <location>
        <begin position="213"/>
        <end position="216"/>
    </location>
</feature>
<feature type="helix" evidence="25">
    <location>
        <begin position="217"/>
        <end position="220"/>
    </location>
</feature>
<feature type="helix" evidence="25">
    <location>
        <begin position="228"/>
        <end position="230"/>
    </location>
</feature>
<feature type="helix" evidence="25">
    <location>
        <begin position="231"/>
        <end position="243"/>
    </location>
</feature>
<feature type="helix" evidence="25">
    <location>
        <begin position="245"/>
        <end position="247"/>
    </location>
</feature>
<feature type="strand" evidence="25">
    <location>
        <begin position="248"/>
        <end position="255"/>
    </location>
</feature>
<feature type="helix" evidence="25">
    <location>
        <begin position="263"/>
        <end position="280"/>
    </location>
</feature>
<feature type="strand" evidence="25">
    <location>
        <begin position="291"/>
        <end position="295"/>
    </location>
</feature>
<feature type="strand" evidence="25">
    <location>
        <begin position="303"/>
        <end position="307"/>
    </location>
</feature>
<feature type="helix" evidence="25">
    <location>
        <begin position="318"/>
        <end position="321"/>
    </location>
</feature>
<sequence>MTASELVAGDLAGGRAPGALPLDTTWHRPGWTIGELEAAKAGRTISVVLPALNEEATIESVIDSISPLVDGLVDELIVLDSGSTDDTEIRAIASGARVVSREQALPEVPVRPGKGEALWRSLAATSGDIVVFIDSDLINPHPLFVPWLVGPLLTGEGIQLVKSFYRRPLQVSDVTSGVCATGGGRVTELVARPLLAALRPELGCVLQPLSGEYAASRELLTSLPFAPGYGVEIGLLIDTFDRLGLDAIAQVNLGVRAHRNRPLDELGAMSRQVIATLLSRCGIPDSGVGLTQFLPGGPDDSDYTRHTWPVSLVDRPPMKVMRPR</sequence>
<gene>
    <name type="primary">gpgS</name>
    <name type="ordered locus">Rv1208</name>
</gene>
<dbReference type="EC" id="2.4.1.266" evidence="2"/>
<dbReference type="EMBL" id="AL123456">
    <property type="protein sequence ID" value="CCP43964.1"/>
    <property type="molecule type" value="Genomic_DNA"/>
</dbReference>
<dbReference type="PIR" id="F70609">
    <property type="entry name" value="F70609"/>
</dbReference>
<dbReference type="RefSeq" id="NP_215724.1">
    <property type="nucleotide sequence ID" value="NC_000962.3"/>
</dbReference>
<dbReference type="RefSeq" id="WP_003406242.1">
    <property type="nucleotide sequence ID" value="NZ_NVQJ01000039.1"/>
</dbReference>
<dbReference type="PDB" id="3E25">
    <property type="method" value="X-ray"/>
    <property type="resolution" value="2.70 A"/>
    <property type="chains" value="A=1-324"/>
</dbReference>
<dbReference type="PDB" id="3E26">
    <property type="method" value="X-ray"/>
    <property type="resolution" value="2.50 A"/>
    <property type="chains" value="A=1-324"/>
</dbReference>
<dbReference type="PDB" id="4DDZ">
    <property type="method" value="X-ray"/>
    <property type="resolution" value="2.60 A"/>
    <property type="chains" value="A=1-324"/>
</dbReference>
<dbReference type="PDB" id="4DE7">
    <property type="method" value="X-ray"/>
    <property type="resolution" value="3.00 A"/>
    <property type="chains" value="A=1-324"/>
</dbReference>
<dbReference type="PDB" id="4DEC">
    <property type="method" value="X-ray"/>
    <property type="resolution" value="1.98 A"/>
    <property type="chains" value="A=1-324"/>
</dbReference>
<dbReference type="PDB" id="4Y6N">
    <property type="method" value="X-ray"/>
    <property type="resolution" value="2.35 A"/>
    <property type="chains" value="A=1-324"/>
</dbReference>
<dbReference type="PDB" id="4Y6U">
    <property type="method" value="X-ray"/>
    <property type="resolution" value="2.27 A"/>
    <property type="chains" value="A=1-324"/>
</dbReference>
<dbReference type="PDB" id="4Y7F">
    <property type="method" value="X-ray"/>
    <property type="resolution" value="3.23 A"/>
    <property type="chains" value="A=1-324"/>
</dbReference>
<dbReference type="PDB" id="4Y7G">
    <property type="method" value="X-ray"/>
    <property type="resolution" value="2.59 A"/>
    <property type="chains" value="A=1-324"/>
</dbReference>
<dbReference type="PDB" id="4Y9X">
    <property type="method" value="X-ray"/>
    <property type="resolution" value="2.64 A"/>
    <property type="chains" value="A=1-324"/>
</dbReference>
<dbReference type="PDB" id="5JQQ">
    <property type="method" value="X-ray"/>
    <property type="resolution" value="2.60 A"/>
    <property type="chains" value="A=1-324"/>
</dbReference>
<dbReference type="PDB" id="5JQX">
    <property type="method" value="X-ray"/>
    <property type="resolution" value="2.82 A"/>
    <property type="chains" value="A/B/C/D=1-324"/>
</dbReference>
<dbReference type="PDB" id="5JT0">
    <property type="method" value="X-ray"/>
    <property type="resolution" value="2.80 A"/>
    <property type="chains" value="A=1-324"/>
</dbReference>
<dbReference type="PDB" id="5JUC">
    <property type="method" value="X-ray"/>
    <property type="resolution" value="2.80 A"/>
    <property type="chains" value="A=1-324"/>
</dbReference>
<dbReference type="PDBsum" id="3E25"/>
<dbReference type="PDBsum" id="3E26"/>
<dbReference type="PDBsum" id="4DDZ"/>
<dbReference type="PDBsum" id="4DE7"/>
<dbReference type="PDBsum" id="4DEC"/>
<dbReference type="PDBsum" id="4Y6N"/>
<dbReference type="PDBsum" id="4Y6U"/>
<dbReference type="PDBsum" id="4Y7F"/>
<dbReference type="PDBsum" id="4Y7G"/>
<dbReference type="PDBsum" id="4Y9X"/>
<dbReference type="PDBsum" id="5JQQ"/>
<dbReference type="PDBsum" id="5JQX"/>
<dbReference type="PDBsum" id="5JT0"/>
<dbReference type="PDBsum" id="5JUC"/>
<dbReference type="SMR" id="P9WMW9"/>
<dbReference type="STRING" id="83332.Rv1208"/>
<dbReference type="PaxDb" id="83332-Rv1208"/>
<dbReference type="DNASU" id="886085"/>
<dbReference type="GeneID" id="886085"/>
<dbReference type="KEGG" id="mtu:Rv1208"/>
<dbReference type="KEGG" id="mtv:RVBD_1208"/>
<dbReference type="TubercuList" id="Rv1208"/>
<dbReference type="eggNOG" id="COG0463">
    <property type="taxonomic scope" value="Bacteria"/>
</dbReference>
<dbReference type="InParanoid" id="P9WMW9"/>
<dbReference type="OrthoDB" id="5011697at2"/>
<dbReference type="PhylomeDB" id="P9WMW9"/>
<dbReference type="BRENDA" id="2.4.1.266">
    <property type="organism ID" value="3445"/>
</dbReference>
<dbReference type="EvolutionaryTrace" id="P9WMW9"/>
<dbReference type="Proteomes" id="UP000001584">
    <property type="component" value="Chromosome"/>
</dbReference>
<dbReference type="GO" id="GO:0016758">
    <property type="term" value="F:hexosyltransferase activity"/>
    <property type="evidence" value="ECO:0000314"/>
    <property type="project" value="MTBBASE"/>
</dbReference>
<dbReference type="GO" id="GO:0000287">
    <property type="term" value="F:magnesium ion binding"/>
    <property type="evidence" value="ECO:0000314"/>
    <property type="project" value="MTBBASE"/>
</dbReference>
<dbReference type="GO" id="GO:0042803">
    <property type="term" value="F:protein homodimerization activity"/>
    <property type="evidence" value="ECO:0000353"/>
    <property type="project" value="MTBBASE"/>
</dbReference>
<dbReference type="GO" id="GO:0006011">
    <property type="term" value="P:UDP-alpha-D-glucose metabolic process"/>
    <property type="evidence" value="ECO:0000314"/>
    <property type="project" value="MTBBASE"/>
</dbReference>
<dbReference type="FunFam" id="3.90.550.10:FF:000242">
    <property type="entry name" value="Glucosyl-3-phosphoglycerate synthase"/>
    <property type="match status" value="1"/>
</dbReference>
<dbReference type="Gene3D" id="3.90.550.10">
    <property type="entry name" value="Spore Coat Polysaccharide Biosynthesis Protein SpsA, Chain A"/>
    <property type="match status" value="1"/>
</dbReference>
<dbReference type="InterPro" id="IPR001173">
    <property type="entry name" value="Glyco_trans_2-like"/>
</dbReference>
<dbReference type="InterPro" id="IPR050256">
    <property type="entry name" value="Glycosyltransferase_2"/>
</dbReference>
<dbReference type="InterPro" id="IPR029044">
    <property type="entry name" value="Nucleotide-diphossugar_trans"/>
</dbReference>
<dbReference type="NCBIfam" id="NF010496">
    <property type="entry name" value="PRK13915.1"/>
    <property type="match status" value="1"/>
</dbReference>
<dbReference type="PANTHER" id="PTHR48090:SF10">
    <property type="entry name" value="GLUCOSYL-3-PHOSPHOGLYCERATE SYNTHASE"/>
    <property type="match status" value="1"/>
</dbReference>
<dbReference type="PANTHER" id="PTHR48090">
    <property type="entry name" value="UNDECAPRENYL-PHOSPHATE 4-DEOXY-4-FORMAMIDO-L-ARABINOSE TRANSFERASE-RELATED"/>
    <property type="match status" value="1"/>
</dbReference>
<dbReference type="Pfam" id="PF00535">
    <property type="entry name" value="Glycos_transf_2"/>
    <property type="match status" value="1"/>
</dbReference>
<dbReference type="SUPFAM" id="SSF53448">
    <property type="entry name" value="Nucleotide-diphospho-sugar transferases"/>
    <property type="match status" value="1"/>
</dbReference>
<organism>
    <name type="scientific">Mycobacterium tuberculosis (strain ATCC 25618 / H37Rv)</name>
    <dbReference type="NCBI Taxonomy" id="83332"/>
    <lineage>
        <taxon>Bacteria</taxon>
        <taxon>Bacillati</taxon>
        <taxon>Actinomycetota</taxon>
        <taxon>Actinomycetes</taxon>
        <taxon>Mycobacteriales</taxon>
        <taxon>Mycobacteriaceae</taxon>
        <taxon>Mycobacterium</taxon>
        <taxon>Mycobacterium tuberculosis complex</taxon>
    </lineage>
</organism>
<evidence type="ECO:0000269" key="1">
    <source>
    </source>
</evidence>
<evidence type="ECO:0000269" key="2">
    <source>
    </source>
</evidence>
<evidence type="ECO:0000269" key="3">
    <source>
    </source>
</evidence>
<evidence type="ECO:0000269" key="4">
    <source>
    </source>
</evidence>
<evidence type="ECO:0000303" key="5">
    <source>
    </source>
</evidence>
<evidence type="ECO:0000303" key="6">
    <source>
    </source>
</evidence>
<evidence type="ECO:0000305" key="7"/>
<evidence type="ECO:0000305" key="8">
    <source>
    </source>
</evidence>
<evidence type="ECO:0000305" key="9">
    <source>
    </source>
</evidence>
<evidence type="ECO:0000305" key="10">
    <source>
    </source>
</evidence>
<evidence type="ECO:0000305" key="11">
    <source>
    </source>
</evidence>
<evidence type="ECO:0007744" key="12">
    <source>
        <dbReference type="PDB" id="3E25"/>
    </source>
</evidence>
<evidence type="ECO:0007744" key="13">
    <source>
        <dbReference type="PDB" id="3E26"/>
    </source>
</evidence>
<evidence type="ECO:0007744" key="14">
    <source>
        <dbReference type="PDB" id="4DDZ"/>
    </source>
</evidence>
<evidence type="ECO:0007744" key="15">
    <source>
        <dbReference type="PDB" id="4DE7"/>
    </source>
</evidence>
<evidence type="ECO:0007744" key="16">
    <source>
        <dbReference type="PDB" id="4DEC"/>
    </source>
</evidence>
<evidence type="ECO:0007744" key="17">
    <source>
        <dbReference type="PDB" id="4Y6N"/>
    </source>
</evidence>
<evidence type="ECO:0007744" key="18">
    <source>
        <dbReference type="PDB" id="4Y6U"/>
    </source>
</evidence>
<evidence type="ECO:0007744" key="19">
    <source>
        <dbReference type="PDB" id="4Y7F"/>
    </source>
</evidence>
<evidence type="ECO:0007744" key="20">
    <source>
        <dbReference type="PDB" id="4Y7G"/>
    </source>
</evidence>
<evidence type="ECO:0007744" key="21">
    <source>
        <dbReference type="PDB" id="4Y9X"/>
    </source>
</evidence>
<evidence type="ECO:0007744" key="22">
    <source>
        <dbReference type="PDB" id="5JQX"/>
    </source>
</evidence>
<evidence type="ECO:0007744" key="23">
    <source>
        <dbReference type="PDB" id="5JT0"/>
    </source>
</evidence>
<evidence type="ECO:0007744" key="24">
    <source>
        <dbReference type="PDB" id="5JUC"/>
    </source>
</evidence>
<evidence type="ECO:0007829" key="25">
    <source>
        <dbReference type="PDB" id="4DEC"/>
    </source>
</evidence>
<comment type="function">
    <text evidence="2">Involved in the biosynthesis of 6-O-methylglucose lipopolysaccarides (MGLPs). Catalyzes the transfer of the glucose moiety from UDP-alpha-D-glucose (UDP-Glc) to the position 2 of 3-phospho-D-glycerate (3-PGA) to form glucosyl-3-phosphoglycerate (GPG).</text>
</comment>
<comment type="catalytic activity">
    <reaction evidence="2">
        <text>an NDP-alpha-D-glucose + (2R)-3-phosphoglycerate = (2R)-2-O-(alpha-D-glucopyranosyl)-3-phospho-glycerate + a ribonucleoside 5'-diphosphate + H(+)</text>
        <dbReference type="Rhea" id="RHEA:47244"/>
        <dbReference type="ChEBI" id="CHEBI:15378"/>
        <dbReference type="ChEBI" id="CHEBI:57930"/>
        <dbReference type="ChEBI" id="CHEBI:58272"/>
        <dbReference type="ChEBI" id="CHEBI:62600"/>
        <dbReference type="ChEBI" id="CHEBI:76533"/>
        <dbReference type="EC" id="2.4.1.266"/>
    </reaction>
    <physiologicalReaction direction="left-to-right" evidence="9">
        <dbReference type="Rhea" id="RHEA:47245"/>
    </physiologicalReaction>
</comment>
<comment type="catalytic activity">
    <reaction evidence="2">
        <text>(2R)-3-phosphoglycerate + UDP-alpha-D-glucose = (2R)-2-O-(alpha-D-glucopyranosyl)-3-phospho-glycerate + UDP + H(+)</text>
        <dbReference type="Rhea" id="RHEA:31319"/>
        <dbReference type="ChEBI" id="CHEBI:15378"/>
        <dbReference type="ChEBI" id="CHEBI:58223"/>
        <dbReference type="ChEBI" id="CHEBI:58272"/>
        <dbReference type="ChEBI" id="CHEBI:58885"/>
        <dbReference type="ChEBI" id="CHEBI:62600"/>
        <dbReference type="EC" id="2.4.1.266"/>
    </reaction>
    <physiologicalReaction direction="left-to-right" evidence="9">
        <dbReference type="Rhea" id="RHEA:31320"/>
    </physiologicalReaction>
</comment>
<comment type="cofactor">
    <cofactor evidence="2">
        <name>Mg(2+)</name>
        <dbReference type="ChEBI" id="CHEBI:18420"/>
    </cofactor>
    <cofactor evidence="2">
        <name>Ca(2+)</name>
        <dbReference type="ChEBI" id="CHEBI:29108"/>
    </cofactor>
    <cofactor evidence="2 10 11">
        <name>Mn(2+)</name>
        <dbReference type="ChEBI" id="CHEBI:29035"/>
    </cofactor>
    <cofactor evidence="2">
        <name>Fe(2+)</name>
        <dbReference type="ChEBI" id="CHEBI:29033"/>
    </cofactor>
    <cofactor evidence="2">
        <name>Co(2+)</name>
        <dbReference type="ChEBI" id="CHEBI:48828"/>
    </cofactor>
    <text evidence="2">Requires divalent cations for activity. Mg(2+) gives the maximal activity, but the enzyme can also use Ca(2+), Mn(2+), Fe(2+) or Co(2+) ions, but not Zn(2+) or Cu(2+) ions.</text>
</comment>
<comment type="subunit">
    <text evidence="1 2 3">Homodimer.</text>
</comment>
<comment type="miscellaneous">
    <text evidence="8">Was identified as a high-confidence drug target.</text>
</comment>
<comment type="miscellaneous">
    <text evidence="3">The glucosyltransferase GpgS does not possess a putative nucleophile residue that could result in the formation of a glycosyl-enzyme covalent intermediate. Therefore, it is expected that the reaction would proceed through a front-side substrate-assisted SNi-type mechanism where the breaking of the glucosidic bond is stabilized by the interaction of the acceptor hydrogen atom O3 of the acceptor 3-PGA with the beta-phosphate of the nucleotide sugar.</text>
</comment>
<comment type="similarity">
    <text evidence="7">Belongs to the glycosyltransferase 2 family.</text>
</comment>
<proteinExistence type="evidence at protein level"/>
<protein>
    <recommendedName>
        <fullName evidence="5">Glucosyl-3-phosphoglycerate synthase</fullName>
        <shortName evidence="7">GpgS</shortName>
        <ecNumber evidence="2">2.4.1.266</ecNumber>
    </recommendedName>
    <alternativeName>
        <fullName evidence="6">Retaining glucosyltransferase</fullName>
    </alternativeName>
</protein>
<accession>P9WMW9</accession>
<accession>F2GFY0</accession>
<accession>L0T8Q4</accession>
<accession>O05309</accession>
<accession>Q7D8M0</accession>
<name>GPGS_MYCTU</name>
<keyword id="KW-0002">3D-structure</keyword>
<keyword id="KW-0106">Calcium</keyword>
<keyword id="KW-0170">Cobalt</keyword>
<keyword id="KW-0328">Glycosyltransferase</keyword>
<keyword id="KW-0408">Iron</keyword>
<keyword id="KW-0460">Magnesium</keyword>
<keyword id="KW-0464">Manganese</keyword>
<keyword id="KW-0479">Metal-binding</keyword>
<keyword id="KW-1185">Reference proteome</keyword>
<keyword id="KW-0808">Transferase</keyword>
<reference key="1">
    <citation type="journal article" date="1998" name="Nature">
        <title>Deciphering the biology of Mycobacterium tuberculosis from the complete genome sequence.</title>
        <authorList>
            <person name="Cole S.T."/>
            <person name="Brosch R."/>
            <person name="Parkhill J."/>
            <person name="Garnier T."/>
            <person name="Churcher C.M."/>
            <person name="Harris D.E."/>
            <person name="Gordon S.V."/>
            <person name="Eiglmeier K."/>
            <person name="Gas S."/>
            <person name="Barry C.E. III"/>
            <person name="Tekaia F."/>
            <person name="Badcock K."/>
            <person name="Basham D."/>
            <person name="Brown D."/>
            <person name="Chillingworth T."/>
            <person name="Connor R."/>
            <person name="Davies R.M."/>
            <person name="Devlin K."/>
            <person name="Feltwell T."/>
            <person name="Gentles S."/>
            <person name="Hamlin N."/>
            <person name="Holroyd S."/>
            <person name="Hornsby T."/>
            <person name="Jagels K."/>
            <person name="Krogh A."/>
            <person name="McLean J."/>
            <person name="Moule S."/>
            <person name="Murphy L.D."/>
            <person name="Oliver S."/>
            <person name="Osborne J."/>
            <person name="Quail M.A."/>
            <person name="Rajandream M.A."/>
            <person name="Rogers J."/>
            <person name="Rutter S."/>
            <person name="Seeger K."/>
            <person name="Skelton S."/>
            <person name="Squares S."/>
            <person name="Squares R."/>
            <person name="Sulston J.E."/>
            <person name="Taylor K."/>
            <person name="Whitehead S."/>
            <person name="Barrell B.G."/>
        </authorList>
    </citation>
    <scope>NUCLEOTIDE SEQUENCE [LARGE SCALE GENOMIC DNA]</scope>
    <source>
        <strain>ATCC 25618 / H37Rv</strain>
    </source>
</reference>
<reference key="2">
    <citation type="journal article" date="2008" name="BMC Syst. Biol.">
        <title>targetTB: a target identification pipeline for Mycobacterium tuberculosis through an interactome, reactome and genome-scale structural analysis.</title>
        <authorList>
            <person name="Raman K."/>
            <person name="Yeturu K."/>
            <person name="Chandra N."/>
        </authorList>
    </citation>
    <scope>IDENTIFICATION AS A DRUG TARGET [LARGE SCALE ANALYSIS]</scope>
</reference>
<reference evidence="12 13" key="3">
    <citation type="journal article" date="2008" name="PLoS ONE">
        <title>Mycobacterium tuberculosis glucosyl-3-phosphoglycerate synthase: structure of a key enzyme in methylglucose lipopolysaccharide biosynthesis.</title>
        <authorList>
            <person name="Pereira P.J."/>
            <person name="Empadinhas N."/>
            <person name="Albuquerque L."/>
            <person name="Sa-Moura B."/>
            <person name="da Costa M.S."/>
            <person name="Macedo-Ribeiro S."/>
        </authorList>
    </citation>
    <scope>X-RAY CRYSTALLOGRAPHY (2.50 ANGSTROMS) IN COMPLEXES WITH 3-PHOSPHO-D-GLYCERATE; UDP AND MAGNESIUM ION</scope>
    <scope>SUBUNIT</scope>
</reference>
<reference evidence="14 15 16" key="4">
    <citation type="journal article" date="2012" name="J. Biol. Chem.">
        <title>Mechanistic insights into the retaining glucosyl-3-phosphoglycerate synthase from mycobacteria.</title>
        <authorList>
            <person name="Urresti S."/>
            <person name="Albesa-Jove D."/>
            <person name="Schaeffer F."/>
            <person name="Pham H.T."/>
            <person name="Kaur D."/>
            <person name="Gest P."/>
            <person name="van der Woerd M.J."/>
            <person name="Carreras-Gonzalez A."/>
            <person name="Lopez-Fernandez S."/>
            <person name="Alzari P.M."/>
            <person name="Brennan P.J."/>
            <person name="Jackson M."/>
            <person name="Guerin M.E."/>
        </authorList>
    </citation>
    <scope>X-RAY CRYSTALLOGRAPHY (1.98 ANGSTROMS) IN COMPLEXES WITH UDP; 3-PHOSPHO-D-GLYCERATE AND MANGANESE ION</scope>
    <scope>FUNCTION</scope>
    <scope>CATALYTIC ACTIVITY</scope>
    <scope>COFACTOR</scope>
    <scope>SUBUNIT</scope>
    <scope>REACTION MECHANISM</scope>
</reference>
<reference evidence="17 18 19 20 21" key="5">
    <citation type="journal article" date="2015" name="Angew. Chem. Int. Ed. Engl.">
        <title>A native ternary complex trapped in a crystal reveals the catalytic mechanism of a retaining glycosyltransferase.</title>
        <authorList>
            <person name="Albesa-Jove D."/>
            <person name="Mendoza F."/>
            <person name="Rodrigo-Unzueta A."/>
            <person name="Gomollon-Bel F."/>
            <person name="Cifuente J.O."/>
            <person name="Urresti S."/>
            <person name="Comino N."/>
            <person name="Gomez H."/>
            <person name="Romero-Garcia J."/>
            <person name="Lluch J.M."/>
            <person name="Sancho-Vaello E."/>
            <person name="Biarnes X."/>
            <person name="Planas A."/>
            <person name="Merino P."/>
            <person name="Masgrau L."/>
            <person name="Guerin M.E."/>
        </authorList>
    </citation>
    <scope>X-RAY CRYSTALLOGRAPHY (2.27 ANGSTROMS) IN COMPLEXES WITH 3-PHOSPHO-D-GLYCERATE; GLYCEROL-3-PHOSPHATE; UDP-ALPHA-D-GLUCOSE AND MANGANESE ION</scope>
    <scope>COFACTOR</scope>
    <scope>SUBUNIT</scope>
    <scope>REACTION MECHANISM</scope>
</reference>
<reference evidence="22 23 24" key="6">
    <citation type="journal article" date="2017" name="Structure">
        <title>Structural snapshots and loop dynamics along the catalytic cycle of glycosyltransferase GpgS.</title>
        <authorList>
            <person name="Albesa-Jove D."/>
            <person name="Romero-Garcia J."/>
            <person name="Sancho-Vaello E."/>
            <person name="Contreras F.X."/>
            <person name="Rodrigo-Unzueta A."/>
            <person name="Comino N."/>
            <person name="Carreras-Gonzalez A."/>
            <person name="Arrasate P."/>
            <person name="Urresti S."/>
            <person name="Biarnes X."/>
            <person name="Planas A."/>
            <person name="Guerin M.E."/>
        </authorList>
    </citation>
    <scope>X-RAY CRYSTALLOGRAPHY (2.82 ANGSTROMS) IN COMPLEXES WITH 3-PHOSPHO-D-GLYCERATE; UDP; GLUCOSYL-3-PHOSPHOGLYCERATE AND MANGANESE ION</scope>
    <scope>COFACTOR</scope>
</reference>